<proteinExistence type="inferred from homology"/>
<comment type="subcellular location">
    <subcellularLocation>
        <location evidence="1">Cytoplasm</location>
        <location evidence="1">Nucleoid</location>
    </subcellularLocation>
</comment>
<comment type="similarity">
    <text evidence="1">Belongs to the YejK family.</text>
</comment>
<evidence type="ECO:0000255" key="1">
    <source>
        <dbReference type="HAMAP-Rule" id="MF_00730"/>
    </source>
</evidence>
<protein>
    <recommendedName>
        <fullName evidence="1">Nucleoid-associated protein SG1574</fullName>
    </recommendedName>
</protein>
<dbReference type="EMBL" id="AP008232">
    <property type="protein sequence ID" value="BAE74849.1"/>
    <property type="molecule type" value="Genomic_DNA"/>
</dbReference>
<dbReference type="RefSeq" id="WP_011411394.1">
    <property type="nucleotide sequence ID" value="NC_007712.1"/>
</dbReference>
<dbReference type="SMR" id="Q2NSM6"/>
<dbReference type="STRING" id="343509.SG1574"/>
<dbReference type="KEGG" id="sgl:SG1574"/>
<dbReference type="eggNOG" id="COG3081">
    <property type="taxonomic scope" value="Bacteria"/>
</dbReference>
<dbReference type="HOGENOM" id="CLU_063050_0_1_6"/>
<dbReference type="OrthoDB" id="9131762at2"/>
<dbReference type="BioCyc" id="SGLO343509:SGP1_RS14270-MONOMER"/>
<dbReference type="Proteomes" id="UP000001932">
    <property type="component" value="Chromosome"/>
</dbReference>
<dbReference type="GO" id="GO:0043590">
    <property type="term" value="C:bacterial nucleoid"/>
    <property type="evidence" value="ECO:0007669"/>
    <property type="project" value="TreeGrafter"/>
</dbReference>
<dbReference type="GO" id="GO:0005737">
    <property type="term" value="C:cytoplasm"/>
    <property type="evidence" value="ECO:0007669"/>
    <property type="project" value="UniProtKB-UniRule"/>
</dbReference>
<dbReference type="GO" id="GO:0003690">
    <property type="term" value="F:double-stranded DNA binding"/>
    <property type="evidence" value="ECO:0007669"/>
    <property type="project" value="TreeGrafter"/>
</dbReference>
<dbReference type="GO" id="GO:0003727">
    <property type="term" value="F:single-stranded RNA binding"/>
    <property type="evidence" value="ECO:0007669"/>
    <property type="project" value="TreeGrafter"/>
</dbReference>
<dbReference type="HAMAP" id="MF_00730">
    <property type="entry name" value="NdpA"/>
    <property type="match status" value="1"/>
</dbReference>
<dbReference type="InterPro" id="IPR007358">
    <property type="entry name" value="Nucleoid_associated_NdpA"/>
</dbReference>
<dbReference type="NCBIfam" id="NF001557">
    <property type="entry name" value="PRK00378.1"/>
    <property type="match status" value="1"/>
</dbReference>
<dbReference type="PANTHER" id="PTHR38772">
    <property type="match status" value="1"/>
</dbReference>
<dbReference type="PANTHER" id="PTHR38772:SF1">
    <property type="entry name" value="NUCLEOID-ASSOCIATED PROTEIN YEJK"/>
    <property type="match status" value="1"/>
</dbReference>
<dbReference type="Pfam" id="PF04245">
    <property type="entry name" value="NA37"/>
    <property type="match status" value="1"/>
</dbReference>
<sequence length="334" mass="37340">MSLDIDQIALHQMIKLDEQTLELVLRDTPLDVSPAVEDMMAELHRVYSAKSKAYGIFTPESELADAVRSCRRGNENFLAFSRTATGRLRDELAKYPFAEGGTVLFCQYRYLAVEYLLIAVLGTCQSMLVNEQLDISSTQYLDIHHADIVACIDLTEWETQPASTRYLTFLKGRVGRKVSDFFMDFLAAAEGLDTKAQNRGLLQAVDDYCTDAALDNRQRQEVRQQVHSYCKEQLQAGEDIALVELSATLAPVSDKTFQAFSSEQGYALEETFPADRGTLLQLTKYAGSGGGVTLNFDAHLLGERIFWDPATDTLTIKGTPPNLRDQLTRRQNGK</sequence>
<feature type="chain" id="PRO_1000045955" description="Nucleoid-associated protein SG1574">
    <location>
        <begin position="1"/>
        <end position="334"/>
    </location>
</feature>
<gene>
    <name type="ordered locus">SG1574</name>
</gene>
<name>NDPA_SODGM</name>
<accession>Q2NSM6</accession>
<reference key="1">
    <citation type="journal article" date="2006" name="Genome Res.">
        <title>Massive genome erosion and functional adaptations provide insights into the symbiotic lifestyle of Sodalis glossinidius in the tsetse host.</title>
        <authorList>
            <person name="Toh H."/>
            <person name="Weiss B.L."/>
            <person name="Perkin S.A.H."/>
            <person name="Yamashita A."/>
            <person name="Oshima K."/>
            <person name="Hattori M."/>
            <person name="Aksoy S."/>
        </authorList>
    </citation>
    <scope>NUCLEOTIDE SEQUENCE [LARGE SCALE GENOMIC DNA]</scope>
    <source>
        <strain>morsitans</strain>
    </source>
</reference>
<organism>
    <name type="scientific">Sodalis glossinidius (strain morsitans)</name>
    <dbReference type="NCBI Taxonomy" id="343509"/>
    <lineage>
        <taxon>Bacteria</taxon>
        <taxon>Pseudomonadati</taxon>
        <taxon>Pseudomonadota</taxon>
        <taxon>Gammaproteobacteria</taxon>
        <taxon>Enterobacterales</taxon>
        <taxon>Bruguierivoracaceae</taxon>
        <taxon>Sodalis</taxon>
    </lineage>
</organism>
<keyword id="KW-0963">Cytoplasm</keyword>